<sequence>MGSAQARQRLLAIFGQVQAYIFQVEMLKRCDPSALLPLVGSLKLNALTIRMLRRKLGGALIEQAQHQQTPLACALTMALEYAEVEGERVLRAVDDVNLAGPEGFFRATMRLDEPCEYHVRVHLDTYGGPIDAEVQFLHDAENFLKQLNYCHLITGFEAGLDALESVARFLTRTVGSGIVVPPELCDPTHPCSVCFEELCVTANQGEAVHRRLLECTCDHITRQMAVRVANIDIARHLPHALSVASERRAAAEAALRALEARRVQGHNGKSAGTEDPTQQVASRLLESHHVFKPASRCLYAVSELKFWLASTKHGDMGQPRAIDTFTENLETLDKQEKFFHLQAATVELALFGRTLDHFDRLFADQLLGLDVIDGMLVGSCAVSPDDHIEALIKACYTHHMSAPLLQRLTDPDTSNREALKQLLGRIGVDTDDGAGELGDALDVDLDNLGGAPPVNSTPCGEDALCRTVSEERPWDKLLERATADASQRRRMYAERLSKRSIASLGRCVREQRRELEKTLRVNVYGEVLLHTYVSSYNGFCARRGFCAAVSRAGTIIDNRSSTSAFDSHQFMKAALLRHPIDQSLMPSITHKFFELINGPVFDNAGHNFAQPPNTALYYSVENVGLLPHLKEELARFMITAAKGDWSISEFQRFYCFEGVTGVTATQRLAWKYIGELILAAAVFSSVFHCGEVRLLRADRTYPDSSGAQRCVSGIYITYEASCPLVAVLSAAPHGAIGAETVVIYDSDVFSLLYAVLQQLAPGSGAN</sequence>
<evidence type="ECO:0000255" key="1">
    <source>
        <dbReference type="HAMAP-Rule" id="MF_04014"/>
    </source>
</evidence>
<protein>
    <recommendedName>
        <fullName evidence="1">Tripartite terminase subunit 1</fullName>
    </recommendedName>
</protein>
<name>TRM1_EHV1</name>
<feature type="chain" id="PRO_0000115879" description="Tripartite terminase subunit 1">
    <location>
        <begin position="1"/>
        <end position="766"/>
    </location>
</feature>
<feature type="zinc finger region" description="C3H1-type" evidence="1">
    <location>
        <begin position="191"/>
        <end position="219"/>
    </location>
</feature>
<feature type="binding site" evidence="1">
    <location>
        <begin position="683"/>
        <end position="690"/>
    </location>
    <ligand>
        <name>ATP</name>
        <dbReference type="ChEBI" id="CHEBI:30616"/>
    </ligand>
</feature>
<gene>
    <name evidence="1" type="primary">TRM1</name>
    <name type="ordered locus">32</name>
</gene>
<accession>P68351</accession>
<accession>P28973</accession>
<accession>P33549</accession>
<dbReference type="EMBL" id="D13930">
    <property type="protein sequence ID" value="BAA03034.1"/>
    <property type="molecule type" value="Genomic_DNA"/>
</dbReference>
<dbReference type="SMR" id="P68351"/>
<dbReference type="GO" id="GO:0042025">
    <property type="term" value="C:host cell nucleus"/>
    <property type="evidence" value="ECO:0007669"/>
    <property type="project" value="UniProtKB-SubCell"/>
</dbReference>
<dbReference type="GO" id="GO:0005524">
    <property type="term" value="F:ATP binding"/>
    <property type="evidence" value="ECO:0007669"/>
    <property type="project" value="UniProtKB-KW"/>
</dbReference>
<dbReference type="GO" id="GO:0008270">
    <property type="term" value="F:zinc ion binding"/>
    <property type="evidence" value="ECO:0007669"/>
    <property type="project" value="UniProtKB-KW"/>
</dbReference>
<dbReference type="GO" id="GO:0019073">
    <property type="term" value="P:viral DNA genome packaging"/>
    <property type="evidence" value="ECO:0007669"/>
    <property type="project" value="InterPro"/>
</dbReference>
<dbReference type="HAMAP" id="MF_04014">
    <property type="entry name" value="HSV_TRM1"/>
    <property type="match status" value="1"/>
</dbReference>
<dbReference type="InterPro" id="IPR000501">
    <property type="entry name" value="UL28/UL56"/>
</dbReference>
<dbReference type="Pfam" id="PF01366">
    <property type="entry name" value="PRTP"/>
    <property type="match status" value="1"/>
</dbReference>
<proteinExistence type="inferred from homology"/>
<organismHost>
    <name type="scientific">Equus caballus</name>
    <name type="common">Horse</name>
    <dbReference type="NCBI Taxonomy" id="9796"/>
</organismHost>
<comment type="function">
    <text evidence="1">Component of the molecular motor that translocates viral genomic DNA in empty capsid during DNA packaging. Forms a tripartite terminase complex together with TRM2 and TRM3 in the host cytoplasm. Once the complex reaches the host nucleus, it interacts with the capsid portal vertex. This portal forms a ring in which genomic DNA is translocated into the capsid. TRM1 carries an endonuclease activity that plays an important role for the cleavage of concatemeric viral DNA into unit length genomes.</text>
</comment>
<comment type="subunit">
    <text evidence="1">Associates with TRM2 and TRM3 to form the tripartite terminase complex. Interacts with portal protein.</text>
</comment>
<comment type="subcellular location">
    <subcellularLocation>
        <location evidence="1">Host nucleus</location>
    </subcellularLocation>
    <text evidence="1">Found associated with the external surface of the viral capsid during assembly and DNA packaging, but seems absent in extracellular mature virions.</text>
</comment>
<comment type="similarity">
    <text evidence="1">Belongs to the herpesviridae TRM1 protein family.</text>
</comment>
<reference key="1">
    <citation type="journal article" date="1993" name="Virus Genes">
        <title>Herpesvirus ICP18.5 and DNA-binding protein genes are conserved in equine herpesvirus-1.</title>
        <authorList>
            <person name="Bell C.W."/>
            <person name="Whalley J.M."/>
        </authorList>
    </citation>
    <scope>NUCLEOTIDE SEQUENCE [GENOMIC DNA]</scope>
</reference>
<organism>
    <name type="scientific">Equine herpesvirus 1 (strain HVS25A)</name>
    <name type="common">EHV-1</name>
    <name type="synonym">Equine abortion virus</name>
    <dbReference type="NCBI Taxonomy" id="10327"/>
    <lineage>
        <taxon>Viruses</taxon>
        <taxon>Duplodnaviria</taxon>
        <taxon>Heunggongvirae</taxon>
        <taxon>Peploviricota</taxon>
        <taxon>Herviviricetes</taxon>
        <taxon>Herpesvirales</taxon>
        <taxon>Orthoherpesviridae</taxon>
        <taxon>Alphaherpesvirinae</taxon>
        <taxon>Varicellovirus</taxon>
        <taxon>Varicellovirus equidalpha1</taxon>
        <taxon>Equid alphaherpesvirus 1</taxon>
    </lineage>
</organism>
<keyword id="KW-0067">ATP-binding</keyword>
<keyword id="KW-1048">Host nucleus</keyword>
<keyword id="KW-0426">Late protein</keyword>
<keyword id="KW-0479">Metal-binding</keyword>
<keyword id="KW-0547">Nucleotide-binding</keyword>
<keyword id="KW-0231">Viral genome packaging</keyword>
<keyword id="KW-1188">Viral release from host cell</keyword>
<keyword id="KW-0862">Zinc</keyword>
<keyword id="KW-0863">Zinc-finger</keyword>